<gene>
    <name type="primary">TMEM151B</name>
    <name type="synonym">C6orf137</name>
    <name type="synonym">TMEM193</name>
</gene>
<name>T151B_HUMAN</name>
<sequence length="566" mass="61506">MSPPGSAAGESAAGGGGGGGGPGVSEELTAAAAAAAADEGPAREEQRPIQPSFTKSLCRESHWKCLLLSLLMYGCLGAVAWCHVTTVTRLTFSSAYQGNSLMYHDSPCSNGYVYIPLAFLLMLYAVYLVECWHCQARHELQHRVDVSSVRERVGRMQQATPCIWWKAISYHYVRRTRQVTRYRNGDAYTTTQVYHERVNTHVAEAEFDYARCGVRDVSKTLVGLEGAPATRLRFTKCFSFASVEAENAYLCQRARFFAENEGLDDYMEAREGMHLKNVDFREFMVAFPDPARPPWYACSSAFWAAALLTLSWPLRVLAEYRTAYAHYHVEKLFGLEGPGSASSAGGGLSPSDELLPPLTHRLPRVNTVDSTELEWHIRSNQQLVPSYSEAVLMDLAGLGTRCGGAGGGYAPSCRYGGVGGPGAAGVAPYRRSCEHCQRAVSSSSIFSRSALSICASPRAGPGPGGGAGCGGSRFSLGRLYGSRRSCLWRSRSGSVNEASCPTEQTRLSSQASMGDDEDDDEEEAGPPPPYHDALYFPVLIVHRQEGCLGHSHRPLHRHGSCVETSL</sequence>
<reference key="1">
    <citation type="journal article" date="2003" name="Nature">
        <title>The DNA sequence and analysis of human chromosome 6.</title>
        <authorList>
            <person name="Mungall A.J."/>
            <person name="Palmer S.A."/>
            <person name="Sims S.K."/>
            <person name="Edwards C.A."/>
            <person name="Ashurst J.L."/>
            <person name="Wilming L."/>
            <person name="Jones M.C."/>
            <person name="Horton R."/>
            <person name="Hunt S.E."/>
            <person name="Scott C.E."/>
            <person name="Gilbert J.G.R."/>
            <person name="Clamp M.E."/>
            <person name="Bethel G."/>
            <person name="Milne S."/>
            <person name="Ainscough R."/>
            <person name="Almeida J.P."/>
            <person name="Ambrose K.D."/>
            <person name="Andrews T.D."/>
            <person name="Ashwell R.I.S."/>
            <person name="Babbage A.K."/>
            <person name="Bagguley C.L."/>
            <person name="Bailey J."/>
            <person name="Banerjee R."/>
            <person name="Barker D.J."/>
            <person name="Barlow K.F."/>
            <person name="Bates K."/>
            <person name="Beare D.M."/>
            <person name="Beasley H."/>
            <person name="Beasley O."/>
            <person name="Bird C.P."/>
            <person name="Blakey S.E."/>
            <person name="Bray-Allen S."/>
            <person name="Brook J."/>
            <person name="Brown A.J."/>
            <person name="Brown J.Y."/>
            <person name="Burford D.C."/>
            <person name="Burrill W."/>
            <person name="Burton J."/>
            <person name="Carder C."/>
            <person name="Carter N.P."/>
            <person name="Chapman J.C."/>
            <person name="Clark S.Y."/>
            <person name="Clark G."/>
            <person name="Clee C.M."/>
            <person name="Clegg S."/>
            <person name="Cobley V."/>
            <person name="Collier R.E."/>
            <person name="Collins J.E."/>
            <person name="Colman L.K."/>
            <person name="Corby N.R."/>
            <person name="Coville G.J."/>
            <person name="Culley K.M."/>
            <person name="Dhami P."/>
            <person name="Davies J."/>
            <person name="Dunn M."/>
            <person name="Earthrowl M.E."/>
            <person name="Ellington A.E."/>
            <person name="Evans K.A."/>
            <person name="Faulkner L."/>
            <person name="Francis M.D."/>
            <person name="Frankish A."/>
            <person name="Frankland J."/>
            <person name="French L."/>
            <person name="Garner P."/>
            <person name="Garnett J."/>
            <person name="Ghori M.J."/>
            <person name="Gilby L.M."/>
            <person name="Gillson C.J."/>
            <person name="Glithero R.J."/>
            <person name="Grafham D.V."/>
            <person name="Grant M."/>
            <person name="Gribble S."/>
            <person name="Griffiths C."/>
            <person name="Griffiths M.N.D."/>
            <person name="Hall R."/>
            <person name="Halls K.S."/>
            <person name="Hammond S."/>
            <person name="Harley J.L."/>
            <person name="Hart E.A."/>
            <person name="Heath P.D."/>
            <person name="Heathcott R."/>
            <person name="Holmes S.J."/>
            <person name="Howden P.J."/>
            <person name="Howe K.L."/>
            <person name="Howell G.R."/>
            <person name="Huckle E."/>
            <person name="Humphray S.J."/>
            <person name="Humphries M.D."/>
            <person name="Hunt A.R."/>
            <person name="Johnson C.M."/>
            <person name="Joy A.A."/>
            <person name="Kay M."/>
            <person name="Keenan S.J."/>
            <person name="Kimberley A.M."/>
            <person name="King A."/>
            <person name="Laird G.K."/>
            <person name="Langford C."/>
            <person name="Lawlor S."/>
            <person name="Leongamornlert D.A."/>
            <person name="Leversha M."/>
            <person name="Lloyd C.R."/>
            <person name="Lloyd D.M."/>
            <person name="Loveland J.E."/>
            <person name="Lovell J."/>
            <person name="Martin S."/>
            <person name="Mashreghi-Mohammadi M."/>
            <person name="Maslen G.L."/>
            <person name="Matthews L."/>
            <person name="McCann O.T."/>
            <person name="McLaren S.J."/>
            <person name="McLay K."/>
            <person name="McMurray A."/>
            <person name="Moore M.J.F."/>
            <person name="Mullikin J.C."/>
            <person name="Niblett D."/>
            <person name="Nickerson T."/>
            <person name="Novik K.L."/>
            <person name="Oliver K."/>
            <person name="Overton-Larty E.K."/>
            <person name="Parker A."/>
            <person name="Patel R."/>
            <person name="Pearce A.V."/>
            <person name="Peck A.I."/>
            <person name="Phillimore B.J.C.T."/>
            <person name="Phillips S."/>
            <person name="Plumb R.W."/>
            <person name="Porter K.M."/>
            <person name="Ramsey Y."/>
            <person name="Ranby S.A."/>
            <person name="Rice C.M."/>
            <person name="Ross M.T."/>
            <person name="Searle S.M."/>
            <person name="Sehra H.K."/>
            <person name="Sheridan E."/>
            <person name="Skuce C.D."/>
            <person name="Smith S."/>
            <person name="Smith M."/>
            <person name="Spraggon L."/>
            <person name="Squares S.L."/>
            <person name="Steward C.A."/>
            <person name="Sycamore N."/>
            <person name="Tamlyn-Hall G."/>
            <person name="Tester J."/>
            <person name="Theaker A.J."/>
            <person name="Thomas D.W."/>
            <person name="Thorpe A."/>
            <person name="Tracey A."/>
            <person name="Tromans A."/>
            <person name="Tubby B."/>
            <person name="Wall M."/>
            <person name="Wallis J.M."/>
            <person name="West A.P."/>
            <person name="White S.S."/>
            <person name="Whitehead S.L."/>
            <person name="Whittaker H."/>
            <person name="Wild A."/>
            <person name="Willey D.J."/>
            <person name="Wilmer T.E."/>
            <person name="Wood J.M."/>
            <person name="Wray P.W."/>
            <person name="Wyatt J.C."/>
            <person name="Young L."/>
            <person name="Younger R.M."/>
            <person name="Bentley D.R."/>
            <person name="Coulson A."/>
            <person name="Durbin R.M."/>
            <person name="Hubbard T."/>
            <person name="Sulston J.E."/>
            <person name="Dunham I."/>
            <person name="Rogers J."/>
            <person name="Beck S."/>
        </authorList>
    </citation>
    <scope>NUCLEOTIDE SEQUENCE [LARGE SCALE GENOMIC DNA]</scope>
</reference>
<reference key="2">
    <citation type="journal article" date="2004" name="Genome Res.">
        <title>The status, quality, and expansion of the NIH full-length cDNA project: the Mammalian Gene Collection (MGC).</title>
        <authorList>
            <consortium name="The MGC Project Team"/>
        </authorList>
    </citation>
    <scope>NUCLEOTIDE SEQUENCE [LARGE SCALE MRNA] OF 22-222 (ISOFORM 2)</scope>
    <source>
        <tissue>Brain</tissue>
    </source>
</reference>
<feature type="chain" id="PRO_0000307220" description="Transmembrane protein 151B">
    <location>
        <begin position="1"/>
        <end position="566"/>
    </location>
</feature>
<feature type="transmembrane region" description="Helical" evidence="1">
    <location>
        <begin position="65"/>
        <end position="85"/>
    </location>
</feature>
<feature type="transmembrane region" description="Helical" evidence="1">
    <location>
        <begin position="112"/>
        <end position="132"/>
    </location>
</feature>
<feature type="region of interest" description="Disordered" evidence="2">
    <location>
        <begin position="1"/>
        <end position="25"/>
    </location>
</feature>
<feature type="region of interest" description="Disordered" evidence="2">
    <location>
        <begin position="495"/>
        <end position="529"/>
    </location>
</feature>
<feature type="compositionally biased region" description="Low complexity" evidence="2">
    <location>
        <begin position="1"/>
        <end position="11"/>
    </location>
</feature>
<feature type="compositionally biased region" description="Gly residues" evidence="2">
    <location>
        <begin position="12"/>
        <end position="23"/>
    </location>
</feature>
<feature type="compositionally biased region" description="Polar residues" evidence="2">
    <location>
        <begin position="495"/>
        <end position="512"/>
    </location>
</feature>
<feature type="compositionally biased region" description="Acidic residues" evidence="2">
    <location>
        <begin position="514"/>
        <end position="524"/>
    </location>
</feature>
<feature type="splice variant" id="VSP_028639" description="In isoform 2." evidence="3">
    <original>YHERVNTHVAEAEFDYARCGVRDVSKTLV</original>
    <variation>PGCLGSQVVPLRSPWRNAQLDAGSDEEPA</variation>
    <location>
        <begin position="194"/>
        <end position="222"/>
    </location>
</feature>
<feature type="splice variant" id="VSP_028640" description="In isoform 2." evidence="3">
    <location>
        <begin position="223"/>
        <end position="566"/>
    </location>
</feature>
<comment type="subcellular location">
    <subcellularLocation>
        <location evidence="4">Membrane</location>
        <topology evidence="4">Multi-pass membrane protein</topology>
    </subcellularLocation>
</comment>
<comment type="alternative products">
    <event type="alternative splicing"/>
    <isoform>
        <id>Q8IW70-1</id>
        <name>1</name>
        <sequence type="displayed"/>
    </isoform>
    <isoform>
        <id>Q8IW70-2</id>
        <name>2</name>
        <sequence type="described" ref="VSP_028639 VSP_028640"/>
    </isoform>
</comment>
<comment type="similarity">
    <text evidence="4">Belongs to the TMEM151 family.</text>
</comment>
<dbReference type="EMBL" id="AL139392">
    <property type="status" value="NOT_ANNOTATED_CDS"/>
    <property type="molecule type" value="Genomic_DNA"/>
</dbReference>
<dbReference type="EMBL" id="AL353588">
    <property type="status" value="NOT_ANNOTATED_CDS"/>
    <property type="molecule type" value="Genomic_DNA"/>
</dbReference>
<dbReference type="EMBL" id="BC040881">
    <property type="protein sequence ID" value="AAH40881.1"/>
    <property type="molecule type" value="mRNA"/>
</dbReference>
<dbReference type="CCDS" id="CCDS47437.1">
    <molecule id="Q8IW70-1"/>
</dbReference>
<dbReference type="RefSeq" id="NP_001131032.1">
    <molecule id="Q8IW70-1"/>
    <property type="nucleotide sequence ID" value="NM_001137560.2"/>
</dbReference>
<dbReference type="BioGRID" id="137212">
    <property type="interactions" value="3"/>
</dbReference>
<dbReference type="FunCoup" id="Q8IW70">
    <property type="interactions" value="41"/>
</dbReference>
<dbReference type="IntAct" id="Q8IW70">
    <property type="interactions" value="1"/>
</dbReference>
<dbReference type="STRING" id="9606.ENSP00000393161"/>
<dbReference type="iPTMnet" id="Q8IW70"/>
<dbReference type="PhosphoSitePlus" id="Q8IW70"/>
<dbReference type="BioMuta" id="TMEM151B"/>
<dbReference type="DMDM" id="160017491"/>
<dbReference type="jPOST" id="Q8IW70"/>
<dbReference type="MassIVE" id="Q8IW70"/>
<dbReference type="PaxDb" id="9606-ENSP00000393161"/>
<dbReference type="PeptideAtlas" id="Q8IW70"/>
<dbReference type="ProteomicsDB" id="70819">
    <molecule id="Q8IW70-1"/>
</dbReference>
<dbReference type="Antibodypedia" id="65189">
    <property type="antibodies" value="70 antibodies from 15 providers"/>
</dbReference>
<dbReference type="DNASU" id="441151"/>
<dbReference type="Ensembl" id="ENST00000438774.2">
    <molecule id="Q8IW70-2"/>
    <property type="protein sequence ID" value="ENSP00000409337.2"/>
    <property type="gene ID" value="ENSG00000178233.18"/>
</dbReference>
<dbReference type="Ensembl" id="ENST00000451188.7">
    <molecule id="Q8IW70-1"/>
    <property type="protein sequence ID" value="ENSP00000393161.2"/>
    <property type="gene ID" value="ENSG00000178233.18"/>
</dbReference>
<dbReference type="GeneID" id="441151"/>
<dbReference type="KEGG" id="hsa:441151"/>
<dbReference type="MANE-Select" id="ENST00000451188.7">
    <property type="protein sequence ID" value="ENSP00000393161.2"/>
    <property type="RefSeq nucleotide sequence ID" value="NM_001137560.2"/>
    <property type="RefSeq protein sequence ID" value="NP_001131032.1"/>
</dbReference>
<dbReference type="UCSC" id="uc003oxf.3">
    <molecule id="Q8IW70-1"/>
    <property type="organism name" value="human"/>
</dbReference>
<dbReference type="AGR" id="HGNC:21315"/>
<dbReference type="CTD" id="441151"/>
<dbReference type="DisGeNET" id="441151"/>
<dbReference type="GeneCards" id="TMEM151B"/>
<dbReference type="HGNC" id="HGNC:21315">
    <property type="gene designation" value="TMEM151B"/>
</dbReference>
<dbReference type="HPA" id="ENSG00000178233">
    <property type="expression patterns" value="Tissue enriched (brain)"/>
</dbReference>
<dbReference type="neXtProt" id="NX_Q8IW70"/>
<dbReference type="OpenTargets" id="ENSG00000178233"/>
<dbReference type="PharmGKB" id="PA162405899"/>
<dbReference type="VEuPathDB" id="HostDB:ENSG00000178233"/>
<dbReference type="eggNOG" id="ENOG502QSYQ">
    <property type="taxonomic scope" value="Eukaryota"/>
</dbReference>
<dbReference type="GeneTree" id="ENSGT00390000013762"/>
<dbReference type="HOGENOM" id="CLU_023650_2_0_1"/>
<dbReference type="InParanoid" id="Q8IW70"/>
<dbReference type="OMA" id="WYASNST"/>
<dbReference type="OrthoDB" id="190434at2759"/>
<dbReference type="PAN-GO" id="Q8IW70">
    <property type="GO annotations" value="0 GO annotations based on evolutionary models"/>
</dbReference>
<dbReference type="PhylomeDB" id="Q8IW70"/>
<dbReference type="TreeFam" id="TF315223"/>
<dbReference type="PathwayCommons" id="Q8IW70"/>
<dbReference type="BioGRID-ORCS" id="441151">
    <property type="hits" value="13 hits in 1152 CRISPR screens"/>
</dbReference>
<dbReference type="ChiTaRS" id="TMEM151B">
    <property type="organism name" value="human"/>
</dbReference>
<dbReference type="GenomeRNAi" id="441151"/>
<dbReference type="Pharos" id="Q8IW70">
    <property type="development level" value="Tdark"/>
</dbReference>
<dbReference type="PRO" id="PR:Q8IW70"/>
<dbReference type="Proteomes" id="UP000005640">
    <property type="component" value="Chromosome 6"/>
</dbReference>
<dbReference type="RNAct" id="Q8IW70">
    <property type="molecule type" value="protein"/>
</dbReference>
<dbReference type="Bgee" id="ENSG00000178233">
    <property type="expression patterns" value="Expressed in paraflocculus and 151 other cell types or tissues"/>
</dbReference>
<dbReference type="GO" id="GO:0016020">
    <property type="term" value="C:membrane"/>
    <property type="evidence" value="ECO:0000318"/>
    <property type="project" value="GO_Central"/>
</dbReference>
<dbReference type="InterPro" id="IPR026767">
    <property type="entry name" value="Tmem151"/>
</dbReference>
<dbReference type="PANTHER" id="PTHR31893">
    <property type="entry name" value="TRANSMEMBRANE PROTEIN 151 HOMOLOG"/>
    <property type="match status" value="1"/>
</dbReference>
<dbReference type="PANTHER" id="PTHR31893:SF4">
    <property type="entry name" value="TRANSMEMBRANE PROTEIN 151B"/>
    <property type="match status" value="1"/>
</dbReference>
<dbReference type="Pfam" id="PF14857">
    <property type="entry name" value="TMEM151"/>
    <property type="match status" value="1"/>
</dbReference>
<proteinExistence type="evidence at protein level"/>
<keyword id="KW-0025">Alternative splicing</keyword>
<keyword id="KW-0472">Membrane</keyword>
<keyword id="KW-1267">Proteomics identification</keyword>
<keyword id="KW-1185">Reference proteome</keyword>
<keyword id="KW-0812">Transmembrane</keyword>
<keyword id="KW-1133">Transmembrane helix</keyword>
<evidence type="ECO:0000255" key="1"/>
<evidence type="ECO:0000256" key="2">
    <source>
        <dbReference type="SAM" id="MobiDB-lite"/>
    </source>
</evidence>
<evidence type="ECO:0000303" key="3">
    <source>
    </source>
</evidence>
<evidence type="ECO:0000305" key="4"/>
<accession>Q8IW70</accession>
<accession>Q5T9V7</accession>
<protein>
    <recommendedName>
        <fullName>Transmembrane protein 151B</fullName>
    </recommendedName>
    <alternativeName>
        <fullName>Transmembrane protein 193</fullName>
    </alternativeName>
</protein>
<organism>
    <name type="scientific">Homo sapiens</name>
    <name type="common">Human</name>
    <dbReference type="NCBI Taxonomy" id="9606"/>
    <lineage>
        <taxon>Eukaryota</taxon>
        <taxon>Metazoa</taxon>
        <taxon>Chordata</taxon>
        <taxon>Craniata</taxon>
        <taxon>Vertebrata</taxon>
        <taxon>Euteleostomi</taxon>
        <taxon>Mammalia</taxon>
        <taxon>Eutheria</taxon>
        <taxon>Euarchontoglires</taxon>
        <taxon>Primates</taxon>
        <taxon>Haplorrhini</taxon>
        <taxon>Catarrhini</taxon>
        <taxon>Hominidae</taxon>
        <taxon>Homo</taxon>
    </lineage>
</organism>